<keyword id="KW-0030">Aminoacyl-tRNA synthetase</keyword>
<keyword id="KW-0067">ATP-binding</keyword>
<keyword id="KW-0963">Cytoplasm</keyword>
<keyword id="KW-0436">Ligase</keyword>
<keyword id="KW-0547">Nucleotide-binding</keyword>
<keyword id="KW-0648">Protein biosynthesis</keyword>
<keyword id="KW-1185">Reference proteome</keyword>
<gene>
    <name evidence="1" type="primary">proS</name>
    <name type="ordered locus">Noc_0897</name>
</gene>
<feature type="chain" id="PRO_0000248729" description="Proline--tRNA ligase">
    <location>
        <begin position="1"/>
        <end position="574"/>
    </location>
</feature>
<evidence type="ECO:0000255" key="1">
    <source>
        <dbReference type="HAMAP-Rule" id="MF_01569"/>
    </source>
</evidence>
<organism>
    <name type="scientific">Nitrosococcus oceani (strain ATCC 19707 / BCRC 17464 / JCM 30415 / NCIMB 11848 / C-107)</name>
    <dbReference type="NCBI Taxonomy" id="323261"/>
    <lineage>
        <taxon>Bacteria</taxon>
        <taxon>Pseudomonadati</taxon>
        <taxon>Pseudomonadota</taxon>
        <taxon>Gammaproteobacteria</taxon>
        <taxon>Chromatiales</taxon>
        <taxon>Chromatiaceae</taxon>
        <taxon>Nitrosococcus</taxon>
    </lineage>
</organism>
<dbReference type="EC" id="6.1.1.15" evidence="1"/>
<dbReference type="EMBL" id="CP000127">
    <property type="protein sequence ID" value="ABA57409.1"/>
    <property type="molecule type" value="Genomic_DNA"/>
</dbReference>
<dbReference type="RefSeq" id="WP_002810516.1">
    <property type="nucleotide sequence ID" value="NC_007484.1"/>
</dbReference>
<dbReference type="SMR" id="Q3JCN7"/>
<dbReference type="FunCoup" id="Q3JCN7">
    <property type="interactions" value="550"/>
</dbReference>
<dbReference type="STRING" id="323261.Noc_0897"/>
<dbReference type="KEGG" id="noc:Noc_0897"/>
<dbReference type="eggNOG" id="COG0442">
    <property type="taxonomic scope" value="Bacteria"/>
</dbReference>
<dbReference type="HOGENOM" id="CLU_016739_0_0_6"/>
<dbReference type="InParanoid" id="Q3JCN7"/>
<dbReference type="Proteomes" id="UP000006838">
    <property type="component" value="Chromosome"/>
</dbReference>
<dbReference type="GO" id="GO:0005829">
    <property type="term" value="C:cytosol"/>
    <property type="evidence" value="ECO:0007669"/>
    <property type="project" value="TreeGrafter"/>
</dbReference>
<dbReference type="GO" id="GO:0002161">
    <property type="term" value="F:aminoacyl-tRNA deacylase activity"/>
    <property type="evidence" value="ECO:0007669"/>
    <property type="project" value="InterPro"/>
</dbReference>
<dbReference type="GO" id="GO:0005524">
    <property type="term" value="F:ATP binding"/>
    <property type="evidence" value="ECO:0007669"/>
    <property type="project" value="UniProtKB-UniRule"/>
</dbReference>
<dbReference type="GO" id="GO:0004827">
    <property type="term" value="F:proline-tRNA ligase activity"/>
    <property type="evidence" value="ECO:0007669"/>
    <property type="project" value="UniProtKB-UniRule"/>
</dbReference>
<dbReference type="GO" id="GO:0006433">
    <property type="term" value="P:prolyl-tRNA aminoacylation"/>
    <property type="evidence" value="ECO:0007669"/>
    <property type="project" value="UniProtKB-UniRule"/>
</dbReference>
<dbReference type="CDD" id="cd04334">
    <property type="entry name" value="ProRS-INS"/>
    <property type="match status" value="1"/>
</dbReference>
<dbReference type="CDD" id="cd00861">
    <property type="entry name" value="ProRS_anticodon_short"/>
    <property type="match status" value="1"/>
</dbReference>
<dbReference type="CDD" id="cd00779">
    <property type="entry name" value="ProRS_core_prok"/>
    <property type="match status" value="1"/>
</dbReference>
<dbReference type="FunFam" id="3.30.930.10:FF:000043">
    <property type="entry name" value="Proline--tRNA ligase"/>
    <property type="match status" value="1"/>
</dbReference>
<dbReference type="FunFam" id="3.30.930.10:FF:000097">
    <property type="entry name" value="Proline--tRNA ligase"/>
    <property type="match status" value="1"/>
</dbReference>
<dbReference type="Gene3D" id="3.40.50.800">
    <property type="entry name" value="Anticodon-binding domain"/>
    <property type="match status" value="1"/>
</dbReference>
<dbReference type="Gene3D" id="3.30.930.10">
    <property type="entry name" value="Bira Bifunctional Protein, Domain 2"/>
    <property type="match status" value="2"/>
</dbReference>
<dbReference type="Gene3D" id="3.90.960.10">
    <property type="entry name" value="YbaK/aminoacyl-tRNA synthetase-associated domain"/>
    <property type="match status" value="1"/>
</dbReference>
<dbReference type="HAMAP" id="MF_01569">
    <property type="entry name" value="Pro_tRNA_synth_type1"/>
    <property type="match status" value="1"/>
</dbReference>
<dbReference type="InterPro" id="IPR002314">
    <property type="entry name" value="aa-tRNA-synt_IIb"/>
</dbReference>
<dbReference type="InterPro" id="IPR006195">
    <property type="entry name" value="aa-tRNA-synth_II"/>
</dbReference>
<dbReference type="InterPro" id="IPR045864">
    <property type="entry name" value="aa-tRNA-synth_II/BPL/LPL"/>
</dbReference>
<dbReference type="InterPro" id="IPR004154">
    <property type="entry name" value="Anticodon-bd"/>
</dbReference>
<dbReference type="InterPro" id="IPR036621">
    <property type="entry name" value="Anticodon-bd_dom_sf"/>
</dbReference>
<dbReference type="InterPro" id="IPR002316">
    <property type="entry name" value="Pro-tRNA-ligase_IIa"/>
</dbReference>
<dbReference type="InterPro" id="IPR004500">
    <property type="entry name" value="Pro-tRNA-synth_IIa_bac-type"/>
</dbReference>
<dbReference type="InterPro" id="IPR023717">
    <property type="entry name" value="Pro-tRNA-Synthase_IIa_type1"/>
</dbReference>
<dbReference type="InterPro" id="IPR050062">
    <property type="entry name" value="Pro-tRNA_synthetase"/>
</dbReference>
<dbReference type="InterPro" id="IPR044140">
    <property type="entry name" value="ProRS_anticodon_short"/>
</dbReference>
<dbReference type="InterPro" id="IPR033730">
    <property type="entry name" value="ProRS_core_prok"/>
</dbReference>
<dbReference type="InterPro" id="IPR036754">
    <property type="entry name" value="YbaK/aa-tRNA-synt-asso_dom_sf"/>
</dbReference>
<dbReference type="InterPro" id="IPR007214">
    <property type="entry name" value="YbaK/aa-tRNA-synth-assoc-dom"/>
</dbReference>
<dbReference type="NCBIfam" id="NF006625">
    <property type="entry name" value="PRK09194.1"/>
    <property type="match status" value="1"/>
</dbReference>
<dbReference type="NCBIfam" id="TIGR00409">
    <property type="entry name" value="proS_fam_II"/>
    <property type="match status" value="1"/>
</dbReference>
<dbReference type="PANTHER" id="PTHR42753">
    <property type="entry name" value="MITOCHONDRIAL RIBOSOME PROTEIN L39/PROLYL-TRNA LIGASE FAMILY MEMBER"/>
    <property type="match status" value="1"/>
</dbReference>
<dbReference type="PANTHER" id="PTHR42753:SF2">
    <property type="entry name" value="PROLINE--TRNA LIGASE"/>
    <property type="match status" value="1"/>
</dbReference>
<dbReference type="Pfam" id="PF03129">
    <property type="entry name" value="HGTP_anticodon"/>
    <property type="match status" value="1"/>
</dbReference>
<dbReference type="Pfam" id="PF00587">
    <property type="entry name" value="tRNA-synt_2b"/>
    <property type="match status" value="1"/>
</dbReference>
<dbReference type="Pfam" id="PF04073">
    <property type="entry name" value="tRNA_edit"/>
    <property type="match status" value="1"/>
</dbReference>
<dbReference type="PIRSF" id="PIRSF001535">
    <property type="entry name" value="ProRS_1"/>
    <property type="match status" value="1"/>
</dbReference>
<dbReference type="PRINTS" id="PR01046">
    <property type="entry name" value="TRNASYNTHPRO"/>
</dbReference>
<dbReference type="SUPFAM" id="SSF52954">
    <property type="entry name" value="Class II aaRS ABD-related"/>
    <property type="match status" value="1"/>
</dbReference>
<dbReference type="SUPFAM" id="SSF55681">
    <property type="entry name" value="Class II aaRS and biotin synthetases"/>
    <property type="match status" value="1"/>
</dbReference>
<dbReference type="SUPFAM" id="SSF55826">
    <property type="entry name" value="YbaK/ProRS associated domain"/>
    <property type="match status" value="1"/>
</dbReference>
<dbReference type="PROSITE" id="PS50862">
    <property type="entry name" value="AA_TRNA_LIGASE_II"/>
    <property type="match status" value="1"/>
</dbReference>
<accession>Q3JCN7</accession>
<sequence>MRTSQYLLTTTRETPADAEIISHQLMLRGSFIRRLAAGLYTWLPLGLRVLRKVENIIREEMDKAGAQEVLMPAVQPAELWRETGRWEQYGPELLRFTDRHQRFFCFGPTHEEVITDLIRREIRSYKQLPANFYQIQLKFRDEIRPRFGVMRSREFLMKDAYSFHPDQTSLAQTYNQMYETYSRIFDRIGLTFRAVQADTGAIGGKTSHEFHVLAASGEDAIAFSDKSTYAANVELAAALPPTDKPASPKETLSLIETPGQCTIKEISQFLNIPSSRCIKTLLVQGSEGELVALALRGDHELNAVKAQKLPQVANPLQFATPEQVWKTCNASIGSIGPMGLAIPLIADHGAVQLTDFACGANMEGKHFTGVNWGRDLPEPSTADIRNVVDGDPSPDGEGTLSIARGIEVGHIFQLGEKYSQAMNATVLDETGRAISLAMGCYGIGVSRVVAAAIEQNHDEHGIIWPASIAPFQLALVPINAHKSARVKEMSDRLYTELQAAGFEVLLDDRQLRPGVIFADMDLIGIPYRLVISERGLENNTVEYKRRQDGKTCAIQLDNFISGLKAELKAPISRR</sequence>
<reference key="1">
    <citation type="journal article" date="2006" name="Appl. Environ. Microbiol.">
        <title>Complete genome sequence of the marine, chemolithoautotrophic, ammonia-oxidizing bacterium Nitrosococcus oceani ATCC 19707.</title>
        <authorList>
            <person name="Klotz M.G."/>
            <person name="Arp D.J."/>
            <person name="Chain P.S.G."/>
            <person name="El-Sheikh A.F."/>
            <person name="Hauser L.J."/>
            <person name="Hommes N.G."/>
            <person name="Larimer F.W."/>
            <person name="Malfatti S.A."/>
            <person name="Norton J.M."/>
            <person name="Poret-Peterson A.T."/>
            <person name="Vergez L.M."/>
            <person name="Ward B.B."/>
        </authorList>
    </citation>
    <scope>NUCLEOTIDE SEQUENCE [LARGE SCALE GENOMIC DNA]</scope>
    <source>
        <strain>ATCC 19707 / BCRC 17464 / JCM 30415 / NCIMB 11848 / C-107</strain>
    </source>
</reference>
<name>SYP_NITOC</name>
<comment type="function">
    <text evidence="1">Catalyzes the attachment of proline to tRNA(Pro) in a two-step reaction: proline is first activated by ATP to form Pro-AMP and then transferred to the acceptor end of tRNA(Pro). As ProRS can inadvertently accommodate and process non-cognate amino acids such as alanine and cysteine, to avoid such errors it has two additional distinct editing activities against alanine. One activity is designated as 'pretransfer' editing and involves the tRNA(Pro)-independent hydrolysis of activated Ala-AMP. The other activity is designated 'posttransfer' editing and involves deacylation of mischarged Ala-tRNA(Pro). The misacylated Cys-tRNA(Pro) is not edited by ProRS.</text>
</comment>
<comment type="catalytic activity">
    <reaction evidence="1">
        <text>tRNA(Pro) + L-proline + ATP = L-prolyl-tRNA(Pro) + AMP + diphosphate</text>
        <dbReference type="Rhea" id="RHEA:14305"/>
        <dbReference type="Rhea" id="RHEA-COMP:9700"/>
        <dbReference type="Rhea" id="RHEA-COMP:9702"/>
        <dbReference type="ChEBI" id="CHEBI:30616"/>
        <dbReference type="ChEBI" id="CHEBI:33019"/>
        <dbReference type="ChEBI" id="CHEBI:60039"/>
        <dbReference type="ChEBI" id="CHEBI:78442"/>
        <dbReference type="ChEBI" id="CHEBI:78532"/>
        <dbReference type="ChEBI" id="CHEBI:456215"/>
        <dbReference type="EC" id="6.1.1.15"/>
    </reaction>
</comment>
<comment type="subunit">
    <text evidence="1">Homodimer.</text>
</comment>
<comment type="subcellular location">
    <subcellularLocation>
        <location evidence="1">Cytoplasm</location>
    </subcellularLocation>
</comment>
<comment type="domain">
    <text evidence="1">Consists of three domains: the N-terminal catalytic domain, the editing domain and the C-terminal anticodon-binding domain.</text>
</comment>
<comment type="similarity">
    <text evidence="1">Belongs to the class-II aminoacyl-tRNA synthetase family. ProS type 1 subfamily.</text>
</comment>
<proteinExistence type="inferred from homology"/>
<protein>
    <recommendedName>
        <fullName evidence="1">Proline--tRNA ligase</fullName>
        <ecNumber evidence="1">6.1.1.15</ecNumber>
    </recommendedName>
    <alternativeName>
        <fullName evidence="1">Prolyl-tRNA synthetase</fullName>
        <shortName evidence="1">ProRS</shortName>
    </alternativeName>
</protein>